<name>VSPHA_HYDHA</name>
<reference key="1">
    <citation type="journal article" date="2007" name="FEBS Lett.">
        <title>Identification and characterization of Harobin, a novel fibrino(geno)lytic serine protease from a sea snake (Lapemis hardwickii).</title>
        <authorList>
            <person name="He J."/>
            <person name="Chen S."/>
            <person name="Gu J."/>
        </authorList>
    </citation>
    <scope>NUCLEOTIDE SEQUENCE [MRNA]</scope>
    <scope>FUNCTION</scope>
    <scope>ACTIVITY REGULATION</scope>
    <scope>BIOPHYSICOCHEMICAL PROPERTIES</scope>
    <scope>MUTAGENESIS OF CYS-106 AND CYS-152</scope>
    <source>
        <tissue>Venom gland</tissue>
    </source>
</reference>
<evidence type="ECO:0000250" key="1"/>
<evidence type="ECO:0000255" key="2"/>
<evidence type="ECO:0000255" key="3">
    <source>
        <dbReference type="PROSITE-ProRule" id="PRU00274"/>
    </source>
</evidence>
<evidence type="ECO:0000269" key="4">
    <source>
    </source>
</evidence>
<evidence type="ECO:0000305" key="5"/>
<evidence type="ECO:0000305" key="6">
    <source>
    </source>
</evidence>
<keyword id="KW-1015">Disulfide bond</keyword>
<keyword id="KW-1206">Fibrinogenolytic toxin</keyword>
<keyword id="KW-1205">Fibrinolytic toxin</keyword>
<keyword id="KW-0325">Glycoprotein</keyword>
<keyword id="KW-1199">Hemostasis impairing toxin</keyword>
<keyword id="KW-0378">Hydrolase</keyword>
<keyword id="KW-0382">Hypotensive agent</keyword>
<keyword id="KW-0645">Protease</keyword>
<keyword id="KW-0964">Secreted</keyword>
<keyword id="KW-0720">Serine protease</keyword>
<keyword id="KW-0732">Signal</keyword>
<keyword id="KW-0800">Toxin</keyword>
<keyword id="KW-0838">Vasoactive</keyword>
<keyword id="KW-0840">Vasodilator</keyword>
<keyword id="KW-0865">Zymogen</keyword>
<proteinExistence type="evidence at protein level"/>
<accession>Q5MCS0</accession>
<feature type="signal peptide" evidence="2">
    <location>
        <begin position="1"/>
        <end position="18"/>
    </location>
</feature>
<feature type="propeptide" id="PRO_0000416022" evidence="1">
    <location>
        <begin position="19"/>
        <end position="33"/>
    </location>
</feature>
<feature type="chain" id="PRO_5000094349" description="Serine protease harobin">
    <location>
        <begin position="34"/>
        <end position="265"/>
    </location>
</feature>
<feature type="domain" description="Peptidase S1" evidence="3">
    <location>
        <begin position="34"/>
        <end position="257"/>
    </location>
</feature>
<feature type="active site" description="Charge relay system" evidence="1">
    <location>
        <position position="74"/>
    </location>
</feature>
<feature type="active site" description="Charge relay system" evidence="1">
    <location>
        <position position="119"/>
    </location>
</feature>
<feature type="active site" description="Charge relay system" evidence="1">
    <location>
        <position position="212"/>
    </location>
</feature>
<feature type="glycosylation site" description="N-linked (GlcNAc...) asparagine" evidence="2">
    <location>
        <position position="112"/>
    </location>
</feature>
<feature type="glycosylation site" description="N-linked (GlcNAc...) asparagine" evidence="2">
    <location>
        <position position="130"/>
    </location>
</feature>
<feature type="disulfide bond" evidence="3">
    <location>
        <begin position="40"/>
        <end position="172"/>
    </location>
</feature>
<feature type="disulfide bond" evidence="3">
    <location>
        <begin position="59"/>
        <end position="75"/>
    </location>
</feature>
<feature type="disulfide bond" evidence="5">
    <location>
        <begin position="106"/>
        <end position="152"/>
    </location>
</feature>
<feature type="disulfide bond" evidence="3">
    <location>
        <begin position="107"/>
        <end position="264"/>
    </location>
</feature>
<feature type="disulfide bond" evidence="3">
    <location>
        <begin position="151"/>
        <end position="218"/>
    </location>
</feature>
<feature type="disulfide bond" evidence="3">
    <location>
        <begin position="183"/>
        <end position="197"/>
    </location>
</feature>
<feature type="disulfide bond" evidence="3">
    <location>
        <begin position="208"/>
        <end position="233"/>
    </location>
</feature>
<feature type="mutagenesis site" description="Is less stable than wild-type enzyme." evidence="4">
    <original>C</original>
    <variation>V</variation>
    <location>
        <position position="106"/>
    </location>
</feature>
<feature type="mutagenesis site" description="Is less stable than wild-type enzyme." evidence="4">
    <original>C</original>
    <variation>S</variation>
    <location>
        <position position="152"/>
    </location>
</feature>
<sequence>MPLIRVLASLLILQLSYGKSLDNGAKAITSLDRIIGGFECNPSEHRSLVYLYNSAGFFCSGTLLNHEWVLTAAHCNREDIQIRLGVHNVHVHYEDEQIRVPKEKLCCLSTNNCTQFSQDIMLIRLNSPVNYSEHIAPLSLPSNPPSMGSVCCVMGWGTITSPEVTYPEVPHCVDINILHIPVCQAAYPTMSGKNILCAGILEGGKDSCKGDSGGPLICNGQIQGIVSWGRFPCAQFLEPGIYTKVFDYKDWIEGIIAGNSNVICP</sequence>
<dbReference type="EC" id="3.4.21.-"/>
<dbReference type="EMBL" id="AY835844">
    <property type="protein sequence ID" value="AAV98367.1"/>
    <property type="molecule type" value="mRNA"/>
</dbReference>
<dbReference type="SMR" id="Q5MCS0"/>
<dbReference type="MEROPS" id="S01.481"/>
<dbReference type="GO" id="GO:0005576">
    <property type="term" value="C:extracellular region"/>
    <property type="evidence" value="ECO:0007669"/>
    <property type="project" value="UniProtKB-SubCell"/>
</dbReference>
<dbReference type="GO" id="GO:0030141">
    <property type="term" value="C:secretory granule"/>
    <property type="evidence" value="ECO:0007669"/>
    <property type="project" value="TreeGrafter"/>
</dbReference>
<dbReference type="GO" id="GO:0004252">
    <property type="term" value="F:serine-type endopeptidase activity"/>
    <property type="evidence" value="ECO:0007669"/>
    <property type="project" value="InterPro"/>
</dbReference>
<dbReference type="GO" id="GO:0090729">
    <property type="term" value="F:toxin activity"/>
    <property type="evidence" value="ECO:0007669"/>
    <property type="project" value="UniProtKB-KW"/>
</dbReference>
<dbReference type="GO" id="GO:0006508">
    <property type="term" value="P:proteolysis"/>
    <property type="evidence" value="ECO:0007669"/>
    <property type="project" value="UniProtKB-KW"/>
</dbReference>
<dbReference type="GO" id="GO:0008217">
    <property type="term" value="P:regulation of blood pressure"/>
    <property type="evidence" value="ECO:0007669"/>
    <property type="project" value="UniProtKB-KW"/>
</dbReference>
<dbReference type="GO" id="GO:0042311">
    <property type="term" value="P:vasodilation"/>
    <property type="evidence" value="ECO:0007669"/>
    <property type="project" value="UniProtKB-KW"/>
</dbReference>
<dbReference type="CDD" id="cd00190">
    <property type="entry name" value="Tryp_SPc"/>
    <property type="match status" value="1"/>
</dbReference>
<dbReference type="FunFam" id="2.40.10.10:FF:000010">
    <property type="entry name" value="Kallikrein related peptidase 11"/>
    <property type="match status" value="1"/>
</dbReference>
<dbReference type="Gene3D" id="2.40.10.10">
    <property type="entry name" value="Trypsin-like serine proteases"/>
    <property type="match status" value="2"/>
</dbReference>
<dbReference type="InterPro" id="IPR009003">
    <property type="entry name" value="Peptidase_S1_PA"/>
</dbReference>
<dbReference type="InterPro" id="IPR043504">
    <property type="entry name" value="Peptidase_S1_PA_chymotrypsin"/>
</dbReference>
<dbReference type="InterPro" id="IPR001314">
    <property type="entry name" value="Peptidase_S1A"/>
</dbReference>
<dbReference type="InterPro" id="IPR001254">
    <property type="entry name" value="Trypsin_dom"/>
</dbReference>
<dbReference type="InterPro" id="IPR018114">
    <property type="entry name" value="TRYPSIN_HIS"/>
</dbReference>
<dbReference type="InterPro" id="IPR033116">
    <property type="entry name" value="TRYPSIN_SER"/>
</dbReference>
<dbReference type="PANTHER" id="PTHR24271:SF47">
    <property type="entry name" value="KALLIKREIN-1"/>
    <property type="match status" value="1"/>
</dbReference>
<dbReference type="PANTHER" id="PTHR24271">
    <property type="entry name" value="KALLIKREIN-RELATED"/>
    <property type="match status" value="1"/>
</dbReference>
<dbReference type="Pfam" id="PF00089">
    <property type="entry name" value="Trypsin"/>
    <property type="match status" value="1"/>
</dbReference>
<dbReference type="PRINTS" id="PR00722">
    <property type="entry name" value="CHYMOTRYPSIN"/>
</dbReference>
<dbReference type="SMART" id="SM00020">
    <property type="entry name" value="Tryp_SPc"/>
    <property type="match status" value="1"/>
</dbReference>
<dbReference type="SUPFAM" id="SSF50494">
    <property type="entry name" value="Trypsin-like serine proteases"/>
    <property type="match status" value="1"/>
</dbReference>
<dbReference type="PROSITE" id="PS50240">
    <property type="entry name" value="TRYPSIN_DOM"/>
    <property type="match status" value="1"/>
</dbReference>
<dbReference type="PROSITE" id="PS00134">
    <property type="entry name" value="TRYPSIN_HIS"/>
    <property type="match status" value="1"/>
</dbReference>
<dbReference type="PROSITE" id="PS00135">
    <property type="entry name" value="TRYPSIN_SER"/>
    <property type="match status" value="1"/>
</dbReference>
<protein>
    <recommendedName>
        <fullName>Serine protease harobin</fullName>
        <ecNumber>3.4.21.-</ecNumber>
    </recommendedName>
    <alternativeName>
        <fullName>Fibrin(ogen)olytic enzyme</fullName>
    </alternativeName>
    <alternativeName>
        <fullName>Snake venom serine protease</fullName>
        <shortName>SVSP</shortName>
    </alternativeName>
</protein>
<organism>
    <name type="scientific">Hydrophis hardwickii</name>
    <name type="common">Hardwick's spine-bellied seasnake</name>
    <name type="synonym">Lapemis hardwickii</name>
    <dbReference type="NCBI Taxonomy" id="8781"/>
    <lineage>
        <taxon>Eukaryota</taxon>
        <taxon>Metazoa</taxon>
        <taxon>Chordata</taxon>
        <taxon>Craniata</taxon>
        <taxon>Vertebrata</taxon>
        <taxon>Euteleostomi</taxon>
        <taxon>Lepidosauria</taxon>
        <taxon>Squamata</taxon>
        <taxon>Bifurcata</taxon>
        <taxon>Unidentata</taxon>
        <taxon>Episquamata</taxon>
        <taxon>Toxicofera</taxon>
        <taxon>Serpentes</taxon>
        <taxon>Colubroidea</taxon>
        <taxon>Elapidae</taxon>
        <taxon>Hydrophiinae</taxon>
        <taxon>Hydrophis</taxon>
    </lineage>
</organism>
<comment type="function">
    <text evidence="4">Serine protein with fibrinolytic and fibrinogenolytic activities. Degrades Bbeta-chain (FGB) of fibrinogen first and then the Aalpha-chain (FGA). Gamma-chain (FGG) are also digested on prolonged incubation. In vitro, it cleaves high molecular weight (HMW) kininogen (KNG) releasing bradykinin that promotes vasodilation. In vitro and in vivo, it cleaves angiotensin-2 (AGT). This explains the reduction of blood pressure in hypertensive rats. Also has antithrombotic effects on thrombosis animal models.</text>
</comment>
<comment type="activity regulation">
    <text evidence="4">Inhibited by PMSF.</text>
</comment>
<comment type="biophysicochemical properties">
    <kinetics>
        <KM evidence="4">0.39 mM for n-p-tosyl-gly-pro-arg p-nitroanilide</KM>
    </kinetics>
    <phDependence>
        <text evidence="4">Optimum pH is 8.0.</text>
    </phDependence>
    <temperatureDependence>
        <text evidence="4">Optimum temperature is 65 degrees Celsius.</text>
    </temperatureDependence>
</comment>
<comment type="subunit">
    <text evidence="1">Monomer.</text>
</comment>
<comment type="subcellular location">
    <subcellularLocation>
        <location evidence="1">Secreted</location>
    </subcellularLocation>
</comment>
<comment type="tissue specificity">
    <text>Expressed by the venom gland.</text>
</comment>
<comment type="PTM">
    <text>Harobin contains three additional Cys residues than other snake venom serine proteases, suggesting an additional disulfide bond. In addition, it is more stable than other snake 6-disulfide-bond serine proteases, since it is less sensitive to DTT.</text>
</comment>
<comment type="miscellaneous">
    <text evidence="6">Negative results: has no fibrinogen clotting ability. Is not a plasminogen activator. Does not affect angiotensin-converting enzyme (ACE). In vivo, does not show hemorrhagic activity in mice (PubMed:17544404).</text>
</comment>
<comment type="similarity">
    <text evidence="3">Belongs to the peptidase S1 family. Snake venom subfamily.</text>
</comment>